<reference key="1">
    <citation type="journal article" date="1992" name="Development">
        <title>The giant gene of Drosophila encodes a b-ZIP DNA-binding protein that regulates the expression of other segmentation gap genes.</title>
        <authorList>
            <person name="Capovilla M."/>
            <person name="Eldon E.D."/>
            <person name="Pirrotta V."/>
        </authorList>
    </citation>
    <scope>NUCLEOTIDE SEQUENCE [GENOMIC DNA]</scope>
    <source>
        <tissue>Embryo</tissue>
    </source>
</reference>
<reference key="2">
    <citation type="journal article" date="2000" name="Science">
        <title>The genome sequence of Drosophila melanogaster.</title>
        <authorList>
            <person name="Adams M.D."/>
            <person name="Celniker S.E."/>
            <person name="Holt R.A."/>
            <person name="Evans C.A."/>
            <person name="Gocayne J.D."/>
            <person name="Amanatides P.G."/>
            <person name="Scherer S.E."/>
            <person name="Li P.W."/>
            <person name="Hoskins R.A."/>
            <person name="Galle R.F."/>
            <person name="George R.A."/>
            <person name="Lewis S.E."/>
            <person name="Richards S."/>
            <person name="Ashburner M."/>
            <person name="Henderson S.N."/>
            <person name="Sutton G.G."/>
            <person name="Wortman J.R."/>
            <person name="Yandell M.D."/>
            <person name="Zhang Q."/>
            <person name="Chen L.X."/>
            <person name="Brandon R.C."/>
            <person name="Rogers Y.-H.C."/>
            <person name="Blazej R.G."/>
            <person name="Champe M."/>
            <person name="Pfeiffer B.D."/>
            <person name="Wan K.H."/>
            <person name="Doyle C."/>
            <person name="Baxter E.G."/>
            <person name="Helt G."/>
            <person name="Nelson C.R."/>
            <person name="Miklos G.L.G."/>
            <person name="Abril J.F."/>
            <person name="Agbayani A."/>
            <person name="An H.-J."/>
            <person name="Andrews-Pfannkoch C."/>
            <person name="Baldwin D."/>
            <person name="Ballew R.M."/>
            <person name="Basu A."/>
            <person name="Baxendale J."/>
            <person name="Bayraktaroglu L."/>
            <person name="Beasley E.M."/>
            <person name="Beeson K.Y."/>
            <person name="Benos P.V."/>
            <person name="Berman B.P."/>
            <person name="Bhandari D."/>
            <person name="Bolshakov S."/>
            <person name="Borkova D."/>
            <person name="Botchan M.R."/>
            <person name="Bouck J."/>
            <person name="Brokstein P."/>
            <person name="Brottier P."/>
            <person name="Burtis K.C."/>
            <person name="Busam D.A."/>
            <person name="Butler H."/>
            <person name="Cadieu E."/>
            <person name="Center A."/>
            <person name="Chandra I."/>
            <person name="Cherry J.M."/>
            <person name="Cawley S."/>
            <person name="Dahlke C."/>
            <person name="Davenport L.B."/>
            <person name="Davies P."/>
            <person name="de Pablos B."/>
            <person name="Delcher A."/>
            <person name="Deng Z."/>
            <person name="Mays A.D."/>
            <person name="Dew I."/>
            <person name="Dietz S.M."/>
            <person name="Dodson K."/>
            <person name="Doup L.E."/>
            <person name="Downes M."/>
            <person name="Dugan-Rocha S."/>
            <person name="Dunkov B.C."/>
            <person name="Dunn P."/>
            <person name="Durbin K.J."/>
            <person name="Evangelista C.C."/>
            <person name="Ferraz C."/>
            <person name="Ferriera S."/>
            <person name="Fleischmann W."/>
            <person name="Fosler C."/>
            <person name="Gabrielian A.E."/>
            <person name="Garg N.S."/>
            <person name="Gelbart W.M."/>
            <person name="Glasser K."/>
            <person name="Glodek A."/>
            <person name="Gong F."/>
            <person name="Gorrell J.H."/>
            <person name="Gu Z."/>
            <person name="Guan P."/>
            <person name="Harris M."/>
            <person name="Harris N.L."/>
            <person name="Harvey D.A."/>
            <person name="Heiman T.J."/>
            <person name="Hernandez J.R."/>
            <person name="Houck J."/>
            <person name="Hostin D."/>
            <person name="Houston K.A."/>
            <person name="Howland T.J."/>
            <person name="Wei M.-H."/>
            <person name="Ibegwam C."/>
            <person name="Jalali M."/>
            <person name="Kalush F."/>
            <person name="Karpen G.H."/>
            <person name="Ke Z."/>
            <person name="Kennison J.A."/>
            <person name="Ketchum K.A."/>
            <person name="Kimmel B.E."/>
            <person name="Kodira C.D."/>
            <person name="Kraft C.L."/>
            <person name="Kravitz S."/>
            <person name="Kulp D."/>
            <person name="Lai Z."/>
            <person name="Lasko P."/>
            <person name="Lei Y."/>
            <person name="Levitsky A.A."/>
            <person name="Li J.H."/>
            <person name="Li Z."/>
            <person name="Liang Y."/>
            <person name="Lin X."/>
            <person name="Liu X."/>
            <person name="Mattei B."/>
            <person name="McIntosh T.C."/>
            <person name="McLeod M.P."/>
            <person name="McPherson D."/>
            <person name="Merkulov G."/>
            <person name="Milshina N.V."/>
            <person name="Mobarry C."/>
            <person name="Morris J."/>
            <person name="Moshrefi A."/>
            <person name="Mount S.M."/>
            <person name="Moy M."/>
            <person name="Murphy B."/>
            <person name="Murphy L."/>
            <person name="Muzny D.M."/>
            <person name="Nelson D.L."/>
            <person name="Nelson D.R."/>
            <person name="Nelson K.A."/>
            <person name="Nixon K."/>
            <person name="Nusskern D.R."/>
            <person name="Pacleb J.M."/>
            <person name="Palazzolo M."/>
            <person name="Pittman G.S."/>
            <person name="Pan S."/>
            <person name="Pollard J."/>
            <person name="Puri V."/>
            <person name="Reese M.G."/>
            <person name="Reinert K."/>
            <person name="Remington K."/>
            <person name="Saunders R.D.C."/>
            <person name="Scheeler F."/>
            <person name="Shen H."/>
            <person name="Shue B.C."/>
            <person name="Siden-Kiamos I."/>
            <person name="Simpson M."/>
            <person name="Skupski M.P."/>
            <person name="Smith T.J."/>
            <person name="Spier E."/>
            <person name="Spradling A.C."/>
            <person name="Stapleton M."/>
            <person name="Strong R."/>
            <person name="Sun E."/>
            <person name="Svirskas R."/>
            <person name="Tector C."/>
            <person name="Turner R."/>
            <person name="Venter E."/>
            <person name="Wang A.H."/>
            <person name="Wang X."/>
            <person name="Wang Z.-Y."/>
            <person name="Wassarman D.A."/>
            <person name="Weinstock G.M."/>
            <person name="Weissenbach J."/>
            <person name="Williams S.M."/>
            <person name="Woodage T."/>
            <person name="Worley K.C."/>
            <person name="Wu D."/>
            <person name="Yang S."/>
            <person name="Yao Q.A."/>
            <person name="Ye J."/>
            <person name="Yeh R.-F."/>
            <person name="Zaveri J.S."/>
            <person name="Zhan M."/>
            <person name="Zhang G."/>
            <person name="Zhao Q."/>
            <person name="Zheng L."/>
            <person name="Zheng X.H."/>
            <person name="Zhong F.N."/>
            <person name="Zhong W."/>
            <person name="Zhou X."/>
            <person name="Zhu S.C."/>
            <person name="Zhu X."/>
            <person name="Smith H.O."/>
            <person name="Gibbs R.A."/>
            <person name="Myers E.W."/>
            <person name="Rubin G.M."/>
            <person name="Venter J.C."/>
        </authorList>
    </citation>
    <scope>NUCLEOTIDE SEQUENCE [LARGE SCALE GENOMIC DNA]</scope>
    <source>
        <strain>Berkeley</strain>
    </source>
</reference>
<reference key="3">
    <citation type="journal article" date="2002" name="Genome Biol.">
        <title>Annotation of the Drosophila melanogaster euchromatic genome: a systematic review.</title>
        <authorList>
            <person name="Misra S."/>
            <person name="Crosby M.A."/>
            <person name="Mungall C.J."/>
            <person name="Matthews B.B."/>
            <person name="Campbell K.S."/>
            <person name="Hradecky P."/>
            <person name="Huang Y."/>
            <person name="Kaminker J.S."/>
            <person name="Millburn G.H."/>
            <person name="Prochnik S.E."/>
            <person name="Smith C.D."/>
            <person name="Tupy J.L."/>
            <person name="Whitfield E.J."/>
            <person name="Bayraktaroglu L."/>
            <person name="Berman B.P."/>
            <person name="Bettencourt B.R."/>
            <person name="Celniker S.E."/>
            <person name="de Grey A.D.N.J."/>
            <person name="Drysdale R.A."/>
            <person name="Harris N.L."/>
            <person name="Richter J."/>
            <person name="Russo S."/>
            <person name="Schroeder A.J."/>
            <person name="Shu S.Q."/>
            <person name="Stapleton M."/>
            <person name="Yamada C."/>
            <person name="Ashburner M."/>
            <person name="Gelbart W.M."/>
            <person name="Rubin G.M."/>
            <person name="Lewis S.E."/>
        </authorList>
    </citation>
    <scope>GENOME REANNOTATION</scope>
    <source>
        <strain>Berkeley</strain>
    </source>
</reference>
<reference key="4">
    <citation type="journal article" date="2000" name="Science">
        <title>From sequence to chromosome: the tip of the X chromosome of D. melanogaster.</title>
        <authorList>
            <person name="Benos P.V."/>
            <person name="Gatt M.K."/>
            <person name="Ashburner M."/>
            <person name="Murphy L."/>
            <person name="Harris D."/>
            <person name="Barrell B.G."/>
            <person name="Ferraz C."/>
            <person name="Vidal S."/>
            <person name="Brun C."/>
            <person name="Demailles J."/>
            <person name="Cadieu E."/>
            <person name="Dreano S."/>
            <person name="Gloux S."/>
            <person name="Lelaure V."/>
            <person name="Mottier S."/>
            <person name="Galibert F."/>
            <person name="Borkova D."/>
            <person name="Minana B."/>
            <person name="Kafatos F.C."/>
            <person name="Louis C."/>
            <person name="Siden-Kiamos I."/>
            <person name="Bolshakov S."/>
            <person name="Papagiannakis G."/>
            <person name="Spanos L."/>
            <person name="Cox S."/>
            <person name="Madueno E."/>
            <person name="de Pablos B."/>
            <person name="Modolell J."/>
            <person name="Peter A."/>
            <person name="Schoettler P."/>
            <person name="Werner M."/>
            <person name="Mourkioti F."/>
            <person name="Beinert N."/>
            <person name="Dowe G."/>
            <person name="Schaefer U."/>
            <person name="Jaeckle H."/>
            <person name="Bucheton A."/>
            <person name="Callister D.M."/>
            <person name="Campbell L.A."/>
            <person name="Darlamitsou A."/>
            <person name="Henderson N.S."/>
            <person name="McMillan P.J."/>
            <person name="Salles C."/>
            <person name="Tait E.A."/>
            <person name="Valenti P."/>
            <person name="Saunders R.D.C."/>
            <person name="Glover D.M."/>
        </authorList>
    </citation>
    <scope>NUCLEOTIDE SEQUENCE [LARGE SCALE GENOMIC DNA]</scope>
    <source>
        <strain>Oregon-R</strain>
    </source>
</reference>
<reference key="5">
    <citation type="submission" date="2009-01" db="EMBL/GenBank/DDBJ databases">
        <authorList>
            <person name="Stapleton M."/>
            <person name="Brokstein P."/>
            <person name="Hong L."/>
            <person name="Agbayani A."/>
            <person name="Carlson J.W."/>
            <person name="Booth B."/>
            <person name="Champe M."/>
            <person name="Chavez C."/>
            <person name="Dorsett V."/>
            <person name="Dresnek D."/>
            <person name="Farfan D."/>
            <person name="Frise E."/>
            <person name="George R.A."/>
            <person name="Gonzalez M."/>
            <person name="Guarin H."/>
            <person name="Kronmiller B."/>
            <person name="Li P.W."/>
            <person name="Liao G."/>
            <person name="Miranda A."/>
            <person name="Mungall C.J."/>
            <person name="Nunoo J."/>
            <person name="Pacleb J.M."/>
            <person name="Paragas V."/>
            <person name="Park S."/>
            <person name="Patel S."/>
            <person name="Phouanenavong S."/>
            <person name="Wan K.H."/>
            <person name="Yu C."/>
            <person name="Lewis S.E."/>
            <person name="Rubin G.M."/>
            <person name="Celniker S.E."/>
        </authorList>
    </citation>
    <scope>NUCLEOTIDE SEQUENCE [LARGE SCALE MRNA]</scope>
    <source>
        <strain>Berkeley</strain>
        <tissue>Embryo</tissue>
    </source>
</reference>
<name>GIANT_DROME</name>
<evidence type="ECO:0000255" key="1">
    <source>
        <dbReference type="PROSITE-ProRule" id="PRU00978"/>
    </source>
</evidence>
<evidence type="ECO:0000256" key="2">
    <source>
        <dbReference type="SAM" id="MobiDB-lite"/>
    </source>
</evidence>
<evidence type="ECO:0000305" key="3"/>
<accession>P39572</accession>
<accession>B9EQS3</accession>
<accession>Q7YU39</accession>
<accession>Q9V3N3</accession>
<proteinExistence type="evidence at transcript level"/>
<gene>
    <name type="primary">gt</name>
    <name type="ORF">CG7952</name>
</gene>
<feature type="chain" id="PRO_0000076637" description="Protein giant">
    <location>
        <begin position="1"/>
        <end position="448"/>
    </location>
</feature>
<feature type="domain" description="bZIP" evidence="1">
    <location>
        <begin position="384"/>
        <end position="447"/>
    </location>
</feature>
<feature type="region of interest" description="Disordered" evidence="2">
    <location>
        <begin position="23"/>
        <end position="47"/>
    </location>
</feature>
<feature type="region of interest" description="Disordered" evidence="2">
    <location>
        <begin position="83"/>
        <end position="134"/>
    </location>
</feature>
<feature type="region of interest" description="Disordered" evidence="2">
    <location>
        <begin position="238"/>
        <end position="259"/>
    </location>
</feature>
<feature type="region of interest" description="Disordered" evidence="2">
    <location>
        <begin position="298"/>
        <end position="363"/>
    </location>
</feature>
<feature type="region of interest" description="Basic motif" evidence="1">
    <location>
        <begin position="390"/>
        <end position="406"/>
    </location>
</feature>
<feature type="region of interest" description="Leucine-zipper" evidence="1">
    <location>
        <begin position="407"/>
        <end position="414"/>
    </location>
</feature>
<feature type="compositionally biased region" description="Low complexity" evidence="2">
    <location>
        <begin position="30"/>
        <end position="47"/>
    </location>
</feature>
<feature type="compositionally biased region" description="Basic and acidic residues" evidence="2">
    <location>
        <begin position="100"/>
        <end position="112"/>
    </location>
</feature>
<feature type="compositionally biased region" description="Low complexity" evidence="2">
    <location>
        <begin position="115"/>
        <end position="134"/>
    </location>
</feature>
<feature type="compositionally biased region" description="Polar residues" evidence="2">
    <location>
        <begin position="298"/>
        <end position="310"/>
    </location>
</feature>
<feature type="compositionally biased region" description="Low complexity" evidence="2">
    <location>
        <begin position="318"/>
        <end position="333"/>
    </location>
</feature>
<feature type="sequence conflict" description="In Ref. 1; CAA43456." evidence="3" ref="1">
    <original>L</original>
    <variation>Q</variation>
    <location>
        <position position="234"/>
    </location>
</feature>
<feature type="sequence conflict" description="In Ref. 5; AAQ22473." evidence="3" ref="5">
    <original>K</original>
    <variation>R</variation>
    <location>
        <position position="383"/>
    </location>
</feature>
<protein>
    <recommendedName>
        <fullName>Protein giant</fullName>
    </recommendedName>
</protein>
<organism>
    <name type="scientific">Drosophila melanogaster</name>
    <name type="common">Fruit fly</name>
    <dbReference type="NCBI Taxonomy" id="7227"/>
    <lineage>
        <taxon>Eukaryota</taxon>
        <taxon>Metazoa</taxon>
        <taxon>Ecdysozoa</taxon>
        <taxon>Arthropoda</taxon>
        <taxon>Hexapoda</taxon>
        <taxon>Insecta</taxon>
        <taxon>Pterygota</taxon>
        <taxon>Neoptera</taxon>
        <taxon>Endopterygota</taxon>
        <taxon>Diptera</taxon>
        <taxon>Brachycera</taxon>
        <taxon>Muscomorpha</taxon>
        <taxon>Ephydroidea</taxon>
        <taxon>Drosophilidae</taxon>
        <taxon>Drosophila</taxon>
        <taxon>Sophophora</taxon>
    </lineage>
</organism>
<sequence length="448" mass="49169">MLMHEKLMAGQFFDLKTDRKPLMHHHQYQHHQQQPLHHLPHSQLPVQGSLGLPKMDLYTAYAYQQQLLGAALSQQQQQQQQQQQHQQLQQQHTSSAEVLDLSRRCDSVETPRKTPSPYQTSYSYGSGSPSASPTSNLLYAAQMQQQQHQQQQQQQQQQQQLASLYPAFYYSNIKQEQATPTAAPPKVTPTANLLQTFAAASAAAAAAAAASSTNSPRPASNASTMQIDVLENPLSPAVEATTPTTSSSGEAGKNTRPFKAFPRDPLVIAANFAATDVLLDNPRVERYTEYRKRVLEQIRSSNGGSRTVTNPKMRRTNSRSGSVNEGSSSNNNSESEDRAAAEESSDCDSQAGNFESKSATSSSSNLANATAANSGISSGSQVKDAAYYERRRKNNAAAKKSRDRRRIKEDEIAIRAAYLERQNIELLCQIDALKVQLAAFTSAKVTTA</sequence>
<keyword id="KW-0217">Developmental protein</keyword>
<keyword id="KW-0238">DNA-binding</keyword>
<keyword id="KW-0539">Nucleus</keyword>
<keyword id="KW-0597">Phosphoprotein</keyword>
<keyword id="KW-1185">Reference proteome</keyword>
<keyword id="KW-0678">Repressor</keyword>
<keyword id="KW-0804">Transcription</keyword>
<keyword id="KW-0805">Transcription regulation</keyword>
<dbReference type="EMBL" id="X61148">
    <property type="protein sequence ID" value="CAA43456.1"/>
    <property type="molecule type" value="Genomic_DNA"/>
</dbReference>
<dbReference type="EMBL" id="AE014298">
    <property type="protein sequence ID" value="AAF45780.1"/>
    <property type="molecule type" value="Genomic_DNA"/>
</dbReference>
<dbReference type="EMBL" id="AL133504">
    <property type="protein sequence ID" value="CAB63520.1"/>
    <property type="molecule type" value="Genomic_DNA"/>
</dbReference>
<dbReference type="EMBL" id="BT010004">
    <property type="protein sequence ID" value="AAQ22473.1"/>
    <property type="molecule type" value="mRNA"/>
</dbReference>
<dbReference type="EMBL" id="BT057998">
    <property type="protein sequence ID" value="ACM16708.1"/>
    <property type="molecule type" value="mRNA"/>
</dbReference>
<dbReference type="PIR" id="S17370">
    <property type="entry name" value="S17370"/>
</dbReference>
<dbReference type="RefSeq" id="NP_525049.1">
    <property type="nucleotide sequence ID" value="NM_080310.3"/>
</dbReference>
<dbReference type="SMR" id="P39572"/>
<dbReference type="BioGRID" id="57763">
    <property type="interactions" value="29"/>
</dbReference>
<dbReference type="DIP" id="DIP-19651N"/>
<dbReference type="FunCoup" id="P39572">
    <property type="interactions" value="37"/>
</dbReference>
<dbReference type="IntAct" id="P39572">
    <property type="interactions" value="11"/>
</dbReference>
<dbReference type="STRING" id="7227.FBpp0070444"/>
<dbReference type="PaxDb" id="7227-FBpp0070444"/>
<dbReference type="DNASU" id="31227"/>
<dbReference type="EnsemblMetazoa" id="FBtr0070460">
    <property type="protein sequence ID" value="FBpp0070444"/>
    <property type="gene ID" value="FBgn0001150"/>
</dbReference>
<dbReference type="GeneID" id="31227"/>
<dbReference type="KEGG" id="dme:Dmel_CG7952"/>
<dbReference type="UCSC" id="CG7952-RB">
    <property type="organism name" value="d. melanogaster"/>
</dbReference>
<dbReference type="AGR" id="FB:FBgn0001150"/>
<dbReference type="CTD" id="31227"/>
<dbReference type="FlyBase" id="FBgn0001150">
    <property type="gene designation" value="gt"/>
</dbReference>
<dbReference type="VEuPathDB" id="VectorBase:FBgn0001150"/>
<dbReference type="eggNOG" id="KOG3119">
    <property type="taxonomic scope" value="Eukaryota"/>
</dbReference>
<dbReference type="HOGENOM" id="CLU_600304_0_0_1"/>
<dbReference type="InParanoid" id="P39572"/>
<dbReference type="OMA" id="NASTMQI"/>
<dbReference type="OrthoDB" id="6022300at2759"/>
<dbReference type="PhylomeDB" id="P39572"/>
<dbReference type="SignaLink" id="P39572"/>
<dbReference type="BioGRID-ORCS" id="31227">
    <property type="hits" value="0 hits in 1 CRISPR screen"/>
</dbReference>
<dbReference type="ChiTaRS" id="Ugt">
    <property type="organism name" value="fly"/>
</dbReference>
<dbReference type="GenomeRNAi" id="31227"/>
<dbReference type="PRO" id="PR:P39572"/>
<dbReference type="Proteomes" id="UP000000803">
    <property type="component" value="Chromosome X"/>
</dbReference>
<dbReference type="Bgee" id="FBgn0001150">
    <property type="expression patterns" value="Expressed in head epidermis primordium (Drosophila) and 43 other cell types or tissues"/>
</dbReference>
<dbReference type="GO" id="GO:0005634">
    <property type="term" value="C:nucleus"/>
    <property type="evidence" value="ECO:0000314"/>
    <property type="project" value="FlyBase"/>
</dbReference>
<dbReference type="GO" id="GO:0003700">
    <property type="term" value="F:DNA-binding transcription factor activity"/>
    <property type="evidence" value="ECO:0000314"/>
    <property type="project" value="FlyBase"/>
</dbReference>
<dbReference type="GO" id="GO:0000981">
    <property type="term" value="F:DNA-binding transcription factor activity, RNA polymerase II-specific"/>
    <property type="evidence" value="ECO:0000314"/>
    <property type="project" value="FlyBase"/>
</dbReference>
<dbReference type="GO" id="GO:0000978">
    <property type="term" value="F:RNA polymerase II cis-regulatory region sequence-specific DNA binding"/>
    <property type="evidence" value="ECO:0000314"/>
    <property type="project" value="FlyBase"/>
</dbReference>
<dbReference type="GO" id="GO:0000977">
    <property type="term" value="F:RNA polymerase II transcription regulatory region sequence-specific DNA binding"/>
    <property type="evidence" value="ECO:0000314"/>
    <property type="project" value="FlyBase"/>
</dbReference>
<dbReference type="GO" id="GO:0043565">
    <property type="term" value="F:sequence-specific DNA binding"/>
    <property type="evidence" value="ECO:0000314"/>
    <property type="project" value="FlyBase"/>
</dbReference>
<dbReference type="GO" id="GO:0009948">
    <property type="term" value="P:anterior/posterior axis specification"/>
    <property type="evidence" value="ECO:0000315"/>
    <property type="project" value="FlyBase"/>
</dbReference>
<dbReference type="GO" id="GO:0007411">
    <property type="term" value="P:axon guidance"/>
    <property type="evidence" value="ECO:0000315"/>
    <property type="project" value="FlyBase"/>
</dbReference>
<dbReference type="GO" id="GO:0040015">
    <property type="term" value="P:negative regulation of multicellular organism growth"/>
    <property type="evidence" value="ECO:0000315"/>
    <property type="project" value="FlyBase"/>
</dbReference>
<dbReference type="GO" id="GO:0000122">
    <property type="term" value="P:negative regulation of transcription by RNA polymerase II"/>
    <property type="evidence" value="ECO:0000314"/>
    <property type="project" value="FlyBase"/>
</dbReference>
<dbReference type="GO" id="GO:0035289">
    <property type="term" value="P:posterior head segmentation"/>
    <property type="evidence" value="ECO:0000304"/>
    <property type="project" value="FlyBase"/>
</dbReference>
<dbReference type="GO" id="GO:0008361">
    <property type="term" value="P:regulation of cell size"/>
    <property type="evidence" value="ECO:0000315"/>
    <property type="project" value="FlyBase"/>
</dbReference>
<dbReference type="GO" id="GO:0010468">
    <property type="term" value="P:regulation of gene expression"/>
    <property type="evidence" value="ECO:0000315"/>
    <property type="project" value="FlyBase"/>
</dbReference>
<dbReference type="GO" id="GO:0006357">
    <property type="term" value="P:regulation of transcription by RNA polymerase II"/>
    <property type="evidence" value="ECO:0000318"/>
    <property type="project" value="GO_Central"/>
</dbReference>
<dbReference type="GO" id="GO:0035271">
    <property type="term" value="P:ring gland development"/>
    <property type="evidence" value="ECO:0000315"/>
    <property type="project" value="FlyBase"/>
</dbReference>
<dbReference type="GO" id="GO:0007431">
    <property type="term" value="P:salivary gland development"/>
    <property type="evidence" value="ECO:0000304"/>
    <property type="project" value="FlyBase"/>
</dbReference>
<dbReference type="GO" id="GO:0007381">
    <property type="term" value="P:specification of segmental identity, labial segment"/>
    <property type="evidence" value="ECO:0000315"/>
    <property type="project" value="FlyBase"/>
</dbReference>
<dbReference type="GO" id="GO:0007354">
    <property type="term" value="P:zygotic determination of anterior/posterior axis, embryo"/>
    <property type="evidence" value="ECO:0000304"/>
    <property type="project" value="FlyBase"/>
</dbReference>
<dbReference type="CDD" id="cd14695">
    <property type="entry name" value="bZIP_HLF"/>
    <property type="match status" value="1"/>
</dbReference>
<dbReference type="Gene3D" id="1.20.5.170">
    <property type="match status" value="1"/>
</dbReference>
<dbReference type="InterPro" id="IPR004827">
    <property type="entry name" value="bZIP"/>
</dbReference>
<dbReference type="InterPro" id="IPR046347">
    <property type="entry name" value="bZIP_sf"/>
</dbReference>
<dbReference type="InterPro" id="IPR040223">
    <property type="entry name" value="PAR_bZIP"/>
</dbReference>
<dbReference type="PANTHER" id="PTHR11988:SF42">
    <property type="entry name" value="PROTEIN GIANT"/>
    <property type="match status" value="1"/>
</dbReference>
<dbReference type="PANTHER" id="PTHR11988">
    <property type="entry name" value="THYROTROPH EMBRYONIC FACTOR RELATED"/>
    <property type="match status" value="1"/>
</dbReference>
<dbReference type="Pfam" id="PF07716">
    <property type="entry name" value="bZIP_2"/>
    <property type="match status" value="1"/>
</dbReference>
<dbReference type="SMART" id="SM00338">
    <property type="entry name" value="BRLZ"/>
    <property type="match status" value="1"/>
</dbReference>
<dbReference type="SUPFAM" id="SSF57959">
    <property type="entry name" value="Leucine zipper domain"/>
    <property type="match status" value="1"/>
</dbReference>
<dbReference type="PROSITE" id="PS50217">
    <property type="entry name" value="BZIP"/>
    <property type="match status" value="1"/>
</dbReference>
<dbReference type="PROSITE" id="PS00036">
    <property type="entry name" value="BZIP_BASIC"/>
    <property type="match status" value="1"/>
</dbReference>
<comment type="function">
    <text>Represses the expression of both the krueppel and knirps segmentation gap genes. Binds, in vitro, to the krueppel regulatory elements CD1 and CD2. It is required in the early embryo for the development of portions of the head and abdomen.</text>
</comment>
<comment type="subunit">
    <text evidence="3">Homodimer or heterodimer.</text>
</comment>
<comment type="subcellular location">
    <subcellularLocation>
        <location>Nucleus</location>
    </subcellularLocation>
</comment>
<comment type="PTM">
    <text>Phosphorylated at multiple sites.</text>
</comment>
<comment type="similarity">
    <text evidence="3">Belongs to the bZIP family.</text>
</comment>
<comment type="caution">
    <text evidence="3">It is uncertain whether Met-1, Met-3, Met-8 or Met-23 is the initiator.</text>
</comment>